<comment type="function">
    <text evidence="1">DNA-dependent RNA polymerase catalyzes the transcription of DNA into RNA using the four ribonucleoside triphosphates as substrates.</text>
</comment>
<comment type="catalytic activity">
    <reaction evidence="1">
        <text>RNA(n) + a ribonucleoside 5'-triphosphate = RNA(n+1) + diphosphate</text>
        <dbReference type="Rhea" id="RHEA:21248"/>
        <dbReference type="Rhea" id="RHEA-COMP:14527"/>
        <dbReference type="Rhea" id="RHEA-COMP:17342"/>
        <dbReference type="ChEBI" id="CHEBI:33019"/>
        <dbReference type="ChEBI" id="CHEBI:61557"/>
        <dbReference type="ChEBI" id="CHEBI:140395"/>
        <dbReference type="EC" id="2.7.7.6"/>
    </reaction>
</comment>
<comment type="subunit">
    <text evidence="1">The RNAP catalytic core consists of 2 alpha, 1 beta, 1 beta' and 1 omega subunit. When a sigma factor is associated with the core the holoenzyme is formed, which can initiate transcription.</text>
</comment>
<comment type="similarity">
    <text evidence="1">Belongs to the RNA polymerase beta chain family.</text>
</comment>
<comment type="sequence caution" evidence="3">
    <conflict type="erroneous initiation">
        <sequence resource="EMBL-CDS" id="ABJ58000"/>
    </conflict>
</comment>
<evidence type="ECO:0000255" key="1">
    <source>
        <dbReference type="HAMAP-Rule" id="MF_01321"/>
    </source>
</evidence>
<evidence type="ECO:0000256" key="2">
    <source>
        <dbReference type="SAM" id="MobiDB-lite"/>
    </source>
</evidence>
<evidence type="ECO:0000305" key="3"/>
<reference key="1">
    <citation type="journal article" date="2006" name="Proc. Natl. Acad. Sci. U.S.A.">
        <title>Comparative genomics of the lactic acid bacteria.</title>
        <authorList>
            <person name="Makarova K.S."/>
            <person name="Slesarev A."/>
            <person name="Wolf Y.I."/>
            <person name="Sorokin A."/>
            <person name="Mirkin B."/>
            <person name="Koonin E.V."/>
            <person name="Pavlov A."/>
            <person name="Pavlova N."/>
            <person name="Karamychev V."/>
            <person name="Polouchine N."/>
            <person name="Shakhova V."/>
            <person name="Grigoriev I."/>
            <person name="Lou Y."/>
            <person name="Rohksar D."/>
            <person name="Lucas S."/>
            <person name="Huang K."/>
            <person name="Goodstein D.M."/>
            <person name="Hawkins T."/>
            <person name="Plengvidhya V."/>
            <person name="Welker D."/>
            <person name="Hughes J."/>
            <person name="Goh Y."/>
            <person name="Benson A."/>
            <person name="Baldwin K."/>
            <person name="Lee J.-H."/>
            <person name="Diaz-Muniz I."/>
            <person name="Dosti B."/>
            <person name="Smeianov V."/>
            <person name="Wechter W."/>
            <person name="Barabote R."/>
            <person name="Lorca G."/>
            <person name="Altermann E."/>
            <person name="Barrangou R."/>
            <person name="Ganesan B."/>
            <person name="Xie Y."/>
            <person name="Rawsthorne H."/>
            <person name="Tamir D."/>
            <person name="Parker C."/>
            <person name="Breidt F."/>
            <person name="Broadbent J.R."/>
            <person name="Hutkins R."/>
            <person name="O'Sullivan D."/>
            <person name="Steele J."/>
            <person name="Unlu G."/>
            <person name="Saier M.H. Jr."/>
            <person name="Klaenhammer T."/>
            <person name="Richardson P."/>
            <person name="Kozyavkin S."/>
            <person name="Weimer B.C."/>
            <person name="Mills D.A."/>
        </authorList>
    </citation>
    <scope>NUCLEOTIDE SEQUENCE [LARGE SCALE GENOMIC DNA]</scope>
    <source>
        <strain>ATCC BAA-365 / Lb-18</strain>
    </source>
</reference>
<gene>
    <name evidence="1" type="primary">rpoB</name>
    <name type="ordered locus">LBUL_0342</name>
</gene>
<sequence length="1221" mass="135974">MLNGHVVNYGQHRTRRSFSRIKEILPLPNLTDVQTESYKWFLDEGVKEVFDDILPISDTSGRLTLEYVDYKLQEPKYTVDESRKHDATYSAPMHVTLKLTNHETGEIKTQDVFFGDLPLMTKSGSFIVNGAERVIVSQLVRSPGVYYSGEFDKNGRQIFGTTVIPNRGAWLEFETDAKNISYVRVDRTRKLPLSVLVRALGFGSDSEIKEIFGDSDTLDLTLDKDVHKNPADSRVAEALKDIYDRLRPGEPKTTDSSRSLLVSRFFDPRRYDLAAVGRYKVNKKLSLKNRLLGYTLAETLADPDTGEVLAAKGTVVNNEVMDVLKDYLDRDDFKTVTYTPSDEGVIPEPVTVQEIKVFSREIPDREIKLISNGHIAEDVKCITPADIIASVNYFLELQEGVGNIDDIDHLGNRRIRRVGELLQNQMRIGLARMERVVRERMSIQDAATVTPQQLINIRPIVGSIKEFFGSSQLSQFMDQNNPLGELTHKRRMSALGPGGLSRDRAGYEVRDVHYTHYGRLCPIETPEGPNIGLINSMATYAIINKYGFLETPYRRVSWATHKVTDKIDYLTADEEDNYIIAGANTPLNEDGSFVDDVILCRHREDNVEVSPDRIDYIDVIPKQVVSVTSACIPFLENDDSNRALMGANHQRQAVPLINPHGPLVATGMEYRAGHDSGDALLAEADGEVEYVDANEIRVRREDQTLDTYTLEKYRRSNATKNYNQTPNVKRGDKVVDGQVIANGPSMADGELALGQNPVIAFTTWNMYNFEDAIMLSERLVKEDVYTSIHIEDYDSEARDTKLGPEEITREIPNVGEDALKDLDENGIIRIGAEVHDGDILVGKVTPKGITELSAEERLLHAIFGEKAREVRDTSLRVPHGGGGVVQDVQVFTREAGDELAPGVNTLVRVYIVQKRKIQVGDKMSGRHGNKGTVALIAPVEDMPYLPDGTPVDICLNPMGVPSRMNIGQLLEIHLGRAARALGIHVATPVFDGASEDDVWDFVREAGVDSDGKTVLYDGRTGEPFHNRVSVGVMYYLKLTHMVDDKIHARSIGPYSLVTQQPLGGKAQFGGQRFGEMEVWALEAYGAAYTLQEILTYKSDDVVGRVKAYEAIVKGERITKPGVPESFRVLVKELQSLGLDLRVLDSDENEVELRDMDEDSNEHVNIDALSRLAEAQEKKKLAEEEAEIAAEAEAEGSAEEDAAEADADANEAETADDDKASK</sequence>
<keyword id="KW-0240">DNA-directed RNA polymerase</keyword>
<keyword id="KW-0548">Nucleotidyltransferase</keyword>
<keyword id="KW-0804">Transcription</keyword>
<keyword id="KW-0808">Transferase</keyword>
<accession>Q04C22</accession>
<proteinExistence type="inferred from homology"/>
<protein>
    <recommendedName>
        <fullName evidence="1">DNA-directed RNA polymerase subunit beta</fullName>
        <shortName evidence="1">RNAP subunit beta</shortName>
        <ecNumber evidence="1">2.7.7.6</ecNumber>
    </recommendedName>
    <alternativeName>
        <fullName evidence="1">RNA polymerase subunit beta</fullName>
    </alternativeName>
    <alternativeName>
        <fullName evidence="1">Transcriptase subunit beta</fullName>
    </alternativeName>
</protein>
<feature type="chain" id="PRO_0000300332" description="DNA-directed RNA polymerase subunit beta">
    <location>
        <begin position="1"/>
        <end position="1221"/>
    </location>
</feature>
<feature type="region of interest" description="Disordered" evidence="2">
    <location>
        <begin position="1176"/>
        <end position="1221"/>
    </location>
</feature>
<feature type="compositionally biased region" description="Acidic residues" evidence="2">
    <location>
        <begin position="1183"/>
        <end position="1215"/>
    </location>
</feature>
<dbReference type="EC" id="2.7.7.6" evidence="1"/>
<dbReference type="EMBL" id="CP000412">
    <property type="protein sequence ID" value="ABJ58000.1"/>
    <property type="status" value="ALT_INIT"/>
    <property type="molecule type" value="Genomic_DNA"/>
</dbReference>
<dbReference type="RefSeq" id="WP_035169457.1">
    <property type="nucleotide sequence ID" value="NC_008529.1"/>
</dbReference>
<dbReference type="SMR" id="Q04C22"/>
<dbReference type="KEGG" id="lbu:LBUL_0342"/>
<dbReference type="HOGENOM" id="CLU_000524_4_1_9"/>
<dbReference type="BioCyc" id="LDEL321956:LBUL_RS01600-MONOMER"/>
<dbReference type="GO" id="GO:0000428">
    <property type="term" value="C:DNA-directed RNA polymerase complex"/>
    <property type="evidence" value="ECO:0007669"/>
    <property type="project" value="UniProtKB-KW"/>
</dbReference>
<dbReference type="GO" id="GO:0003677">
    <property type="term" value="F:DNA binding"/>
    <property type="evidence" value="ECO:0007669"/>
    <property type="project" value="UniProtKB-UniRule"/>
</dbReference>
<dbReference type="GO" id="GO:0003899">
    <property type="term" value="F:DNA-directed RNA polymerase activity"/>
    <property type="evidence" value="ECO:0007669"/>
    <property type="project" value="UniProtKB-UniRule"/>
</dbReference>
<dbReference type="GO" id="GO:0032549">
    <property type="term" value="F:ribonucleoside binding"/>
    <property type="evidence" value="ECO:0007669"/>
    <property type="project" value="InterPro"/>
</dbReference>
<dbReference type="GO" id="GO:0006351">
    <property type="term" value="P:DNA-templated transcription"/>
    <property type="evidence" value="ECO:0007669"/>
    <property type="project" value="UniProtKB-UniRule"/>
</dbReference>
<dbReference type="CDD" id="cd00653">
    <property type="entry name" value="RNA_pol_B_RPB2"/>
    <property type="match status" value="1"/>
</dbReference>
<dbReference type="FunFam" id="3.90.1800.10:FF:000001">
    <property type="entry name" value="DNA-directed RNA polymerase subunit beta"/>
    <property type="match status" value="1"/>
</dbReference>
<dbReference type="Gene3D" id="2.40.50.100">
    <property type="match status" value="1"/>
</dbReference>
<dbReference type="Gene3D" id="2.40.50.150">
    <property type="match status" value="1"/>
</dbReference>
<dbReference type="Gene3D" id="3.90.1100.10">
    <property type="match status" value="1"/>
</dbReference>
<dbReference type="Gene3D" id="2.30.150.10">
    <property type="entry name" value="DNA-directed RNA polymerase, beta subunit, external 1 domain"/>
    <property type="match status" value="1"/>
</dbReference>
<dbReference type="Gene3D" id="2.40.270.10">
    <property type="entry name" value="DNA-directed RNA polymerase, subunit 2, domain 6"/>
    <property type="match status" value="1"/>
</dbReference>
<dbReference type="Gene3D" id="3.90.1800.10">
    <property type="entry name" value="RNA polymerase alpha subunit dimerisation domain"/>
    <property type="match status" value="1"/>
</dbReference>
<dbReference type="Gene3D" id="3.90.1110.10">
    <property type="entry name" value="RNA polymerase Rpb2, domain 2"/>
    <property type="match status" value="1"/>
</dbReference>
<dbReference type="HAMAP" id="MF_01321">
    <property type="entry name" value="RNApol_bact_RpoB"/>
    <property type="match status" value="1"/>
</dbReference>
<dbReference type="InterPro" id="IPR042107">
    <property type="entry name" value="DNA-dir_RNA_pol_bsu_ext_1_sf"/>
</dbReference>
<dbReference type="InterPro" id="IPR019462">
    <property type="entry name" value="DNA-dir_RNA_pol_bsu_external_1"/>
</dbReference>
<dbReference type="InterPro" id="IPR015712">
    <property type="entry name" value="DNA-dir_RNA_pol_su2"/>
</dbReference>
<dbReference type="InterPro" id="IPR007120">
    <property type="entry name" value="DNA-dir_RNAP_su2_dom"/>
</dbReference>
<dbReference type="InterPro" id="IPR037033">
    <property type="entry name" value="DNA-dir_RNAP_su2_hyb_sf"/>
</dbReference>
<dbReference type="InterPro" id="IPR010243">
    <property type="entry name" value="RNA_pol_bsu_bac"/>
</dbReference>
<dbReference type="InterPro" id="IPR007121">
    <property type="entry name" value="RNA_pol_bsu_CS"/>
</dbReference>
<dbReference type="InterPro" id="IPR007644">
    <property type="entry name" value="RNA_pol_bsu_protrusion"/>
</dbReference>
<dbReference type="InterPro" id="IPR007642">
    <property type="entry name" value="RNA_pol_Rpb2_2"/>
</dbReference>
<dbReference type="InterPro" id="IPR037034">
    <property type="entry name" value="RNA_pol_Rpb2_2_sf"/>
</dbReference>
<dbReference type="InterPro" id="IPR007645">
    <property type="entry name" value="RNA_pol_Rpb2_3"/>
</dbReference>
<dbReference type="InterPro" id="IPR007641">
    <property type="entry name" value="RNA_pol_Rpb2_7"/>
</dbReference>
<dbReference type="InterPro" id="IPR014724">
    <property type="entry name" value="RNA_pol_RPB2_OB-fold"/>
</dbReference>
<dbReference type="NCBIfam" id="NF001616">
    <property type="entry name" value="PRK00405.1"/>
    <property type="match status" value="1"/>
</dbReference>
<dbReference type="NCBIfam" id="TIGR02013">
    <property type="entry name" value="rpoB"/>
    <property type="match status" value="1"/>
</dbReference>
<dbReference type="PANTHER" id="PTHR20856">
    <property type="entry name" value="DNA-DIRECTED RNA POLYMERASE I SUBUNIT 2"/>
    <property type="match status" value="1"/>
</dbReference>
<dbReference type="Pfam" id="PF04563">
    <property type="entry name" value="RNA_pol_Rpb2_1"/>
    <property type="match status" value="1"/>
</dbReference>
<dbReference type="Pfam" id="PF04561">
    <property type="entry name" value="RNA_pol_Rpb2_2"/>
    <property type="match status" value="2"/>
</dbReference>
<dbReference type="Pfam" id="PF04565">
    <property type="entry name" value="RNA_pol_Rpb2_3"/>
    <property type="match status" value="1"/>
</dbReference>
<dbReference type="Pfam" id="PF10385">
    <property type="entry name" value="RNA_pol_Rpb2_45"/>
    <property type="match status" value="1"/>
</dbReference>
<dbReference type="Pfam" id="PF00562">
    <property type="entry name" value="RNA_pol_Rpb2_6"/>
    <property type="match status" value="1"/>
</dbReference>
<dbReference type="Pfam" id="PF04560">
    <property type="entry name" value="RNA_pol_Rpb2_7"/>
    <property type="match status" value="1"/>
</dbReference>
<dbReference type="SUPFAM" id="SSF64484">
    <property type="entry name" value="beta and beta-prime subunits of DNA dependent RNA-polymerase"/>
    <property type="match status" value="1"/>
</dbReference>
<dbReference type="PROSITE" id="PS01166">
    <property type="entry name" value="RNA_POL_BETA"/>
    <property type="match status" value="1"/>
</dbReference>
<name>RPOB_LACDB</name>
<organism>
    <name type="scientific">Lactobacillus delbrueckii subsp. bulgaricus (strain ATCC BAA-365 / Lb-18)</name>
    <dbReference type="NCBI Taxonomy" id="321956"/>
    <lineage>
        <taxon>Bacteria</taxon>
        <taxon>Bacillati</taxon>
        <taxon>Bacillota</taxon>
        <taxon>Bacilli</taxon>
        <taxon>Lactobacillales</taxon>
        <taxon>Lactobacillaceae</taxon>
        <taxon>Lactobacillus</taxon>
    </lineage>
</organism>